<feature type="chain" id="PRO_0000416929" description="U2 small nuclear ribonucleoprotein B''">
    <location>
        <begin position="1"/>
        <end position="232"/>
    </location>
</feature>
<feature type="domain" description="RRM 1" evidence="2">
    <location>
        <begin position="10"/>
        <end position="89"/>
    </location>
</feature>
<feature type="domain" description="RRM 2" evidence="2">
    <location>
        <begin position="158"/>
        <end position="232"/>
    </location>
</feature>
<feature type="region of interest" description="Disordered" evidence="3">
    <location>
        <begin position="100"/>
        <end position="157"/>
    </location>
</feature>
<feature type="compositionally biased region" description="Basic and acidic residues" evidence="3">
    <location>
        <begin position="108"/>
        <end position="122"/>
    </location>
</feature>
<feature type="compositionally biased region" description="Polar residues" evidence="3">
    <location>
        <begin position="123"/>
        <end position="139"/>
    </location>
</feature>
<feature type="compositionally biased region" description="Polar residues" evidence="3">
    <location>
        <begin position="146"/>
        <end position="156"/>
    </location>
</feature>
<feature type="sequence conflict" description="In Ref. 5; AAM64950." evidence="10" ref="5">
    <original>Q</original>
    <variation>H</variation>
    <location>
        <position position="10"/>
    </location>
</feature>
<feature type="sequence conflict" description="In Ref. 5; AAM64950." evidence="10" ref="5">
    <original>D</original>
    <variation>E</variation>
    <location>
        <position position="120"/>
    </location>
</feature>
<organism>
    <name type="scientific">Arabidopsis thaliana</name>
    <name type="common">Mouse-ear cress</name>
    <dbReference type="NCBI Taxonomy" id="3702"/>
    <lineage>
        <taxon>Eukaryota</taxon>
        <taxon>Viridiplantae</taxon>
        <taxon>Streptophyta</taxon>
        <taxon>Embryophyta</taxon>
        <taxon>Tracheophyta</taxon>
        <taxon>Spermatophyta</taxon>
        <taxon>Magnoliopsida</taxon>
        <taxon>eudicotyledons</taxon>
        <taxon>Gunneridae</taxon>
        <taxon>Pentapetalae</taxon>
        <taxon>rosids</taxon>
        <taxon>malvids</taxon>
        <taxon>Brassicales</taxon>
        <taxon>Brassicaceae</taxon>
        <taxon>Camelineae</taxon>
        <taxon>Arabidopsis</taxon>
    </lineage>
</organism>
<reference key="1">
    <citation type="journal article" date="1999" name="Nature">
        <title>Sequence and analysis of chromosome 2 of the plant Arabidopsis thaliana.</title>
        <authorList>
            <person name="Lin X."/>
            <person name="Kaul S."/>
            <person name="Rounsley S.D."/>
            <person name="Shea T.P."/>
            <person name="Benito M.-I."/>
            <person name="Town C.D."/>
            <person name="Fujii C.Y."/>
            <person name="Mason T.M."/>
            <person name="Bowman C.L."/>
            <person name="Barnstead M.E."/>
            <person name="Feldblyum T.V."/>
            <person name="Buell C.R."/>
            <person name="Ketchum K.A."/>
            <person name="Lee J.J."/>
            <person name="Ronning C.M."/>
            <person name="Koo H.L."/>
            <person name="Moffat K.S."/>
            <person name="Cronin L.A."/>
            <person name="Shen M."/>
            <person name="Pai G."/>
            <person name="Van Aken S."/>
            <person name="Umayam L."/>
            <person name="Tallon L.J."/>
            <person name="Gill J.E."/>
            <person name="Adams M.D."/>
            <person name="Carrera A.J."/>
            <person name="Creasy T.H."/>
            <person name="Goodman H.M."/>
            <person name="Somerville C.R."/>
            <person name="Copenhaver G.P."/>
            <person name="Preuss D."/>
            <person name="Nierman W.C."/>
            <person name="White O."/>
            <person name="Eisen J.A."/>
            <person name="Salzberg S.L."/>
            <person name="Fraser C.M."/>
            <person name="Venter J.C."/>
        </authorList>
    </citation>
    <scope>NUCLEOTIDE SEQUENCE [LARGE SCALE GENOMIC DNA]</scope>
    <source>
        <strain>cv. Columbia</strain>
    </source>
</reference>
<reference key="2">
    <citation type="journal article" date="2017" name="Plant J.">
        <title>Araport11: a complete reannotation of the Arabidopsis thaliana reference genome.</title>
        <authorList>
            <person name="Cheng C.Y."/>
            <person name="Krishnakumar V."/>
            <person name="Chan A.P."/>
            <person name="Thibaud-Nissen F."/>
            <person name="Schobel S."/>
            <person name="Town C.D."/>
        </authorList>
    </citation>
    <scope>GENOME REANNOTATION</scope>
    <source>
        <strain>cv. Columbia</strain>
    </source>
</reference>
<reference key="3">
    <citation type="journal article" date="2003" name="Science">
        <title>Empirical analysis of transcriptional activity in the Arabidopsis genome.</title>
        <authorList>
            <person name="Yamada K."/>
            <person name="Lim J."/>
            <person name="Dale J.M."/>
            <person name="Chen H."/>
            <person name="Shinn P."/>
            <person name="Palm C.J."/>
            <person name="Southwick A.M."/>
            <person name="Wu H.C."/>
            <person name="Kim C.J."/>
            <person name="Nguyen M."/>
            <person name="Pham P.K."/>
            <person name="Cheuk R.F."/>
            <person name="Karlin-Newmann G."/>
            <person name="Liu S.X."/>
            <person name="Lam B."/>
            <person name="Sakano H."/>
            <person name="Wu T."/>
            <person name="Yu G."/>
            <person name="Miranda M."/>
            <person name="Quach H.L."/>
            <person name="Tripp M."/>
            <person name="Chang C.H."/>
            <person name="Lee J.M."/>
            <person name="Toriumi M.J."/>
            <person name="Chan M.M."/>
            <person name="Tang C.C."/>
            <person name="Onodera C.S."/>
            <person name="Deng J.M."/>
            <person name="Akiyama K."/>
            <person name="Ansari Y."/>
            <person name="Arakawa T."/>
            <person name="Banh J."/>
            <person name="Banno F."/>
            <person name="Bowser L."/>
            <person name="Brooks S.Y."/>
            <person name="Carninci P."/>
            <person name="Chao Q."/>
            <person name="Choy N."/>
            <person name="Enju A."/>
            <person name="Goldsmith A.D."/>
            <person name="Gurjal M."/>
            <person name="Hansen N.F."/>
            <person name="Hayashizaki Y."/>
            <person name="Johnson-Hopson C."/>
            <person name="Hsuan V.W."/>
            <person name="Iida K."/>
            <person name="Karnes M."/>
            <person name="Khan S."/>
            <person name="Koesema E."/>
            <person name="Ishida J."/>
            <person name="Jiang P.X."/>
            <person name="Jones T."/>
            <person name="Kawai J."/>
            <person name="Kamiya A."/>
            <person name="Meyers C."/>
            <person name="Nakajima M."/>
            <person name="Narusaka M."/>
            <person name="Seki M."/>
            <person name="Sakurai T."/>
            <person name="Satou M."/>
            <person name="Tamse R."/>
            <person name="Vaysberg M."/>
            <person name="Wallender E.K."/>
            <person name="Wong C."/>
            <person name="Yamamura Y."/>
            <person name="Yuan S."/>
            <person name="Shinozaki K."/>
            <person name="Davis R.W."/>
            <person name="Theologis A."/>
            <person name="Ecker J.R."/>
        </authorList>
    </citation>
    <scope>NUCLEOTIDE SEQUENCE [LARGE SCALE MRNA]</scope>
    <source>
        <strain>cv. Columbia</strain>
    </source>
</reference>
<reference key="4">
    <citation type="submission" date="2006-07" db="EMBL/GenBank/DDBJ databases">
        <title>Large-scale analysis of RIKEN Arabidopsis full-length (RAFL) cDNAs.</title>
        <authorList>
            <person name="Totoki Y."/>
            <person name="Seki M."/>
            <person name="Ishida J."/>
            <person name="Nakajima M."/>
            <person name="Enju A."/>
            <person name="Kamiya A."/>
            <person name="Narusaka M."/>
            <person name="Shin-i T."/>
            <person name="Nakagawa M."/>
            <person name="Sakamoto N."/>
            <person name="Oishi K."/>
            <person name="Kohara Y."/>
            <person name="Kobayashi M."/>
            <person name="Toyoda A."/>
            <person name="Sakaki Y."/>
            <person name="Sakurai T."/>
            <person name="Iida K."/>
            <person name="Akiyama K."/>
            <person name="Satou M."/>
            <person name="Toyoda T."/>
            <person name="Konagaya A."/>
            <person name="Carninci P."/>
            <person name="Kawai J."/>
            <person name="Hayashizaki Y."/>
            <person name="Shinozaki K."/>
        </authorList>
    </citation>
    <scope>NUCLEOTIDE SEQUENCE [LARGE SCALE MRNA]</scope>
    <source>
        <strain>cv. Columbia</strain>
    </source>
</reference>
<reference key="5">
    <citation type="submission" date="2002-03" db="EMBL/GenBank/DDBJ databases">
        <title>Full-length cDNA from Arabidopsis thaliana.</title>
        <authorList>
            <person name="Brover V.V."/>
            <person name="Troukhan M.E."/>
            <person name="Alexandrov N.A."/>
            <person name="Lu Y.-P."/>
            <person name="Flavell R.B."/>
            <person name="Feldmann K.A."/>
        </authorList>
    </citation>
    <scope>NUCLEOTIDE SEQUENCE [LARGE SCALE MRNA]</scope>
</reference>
<reference key="6">
    <citation type="journal article" date="1998" name="J. Cell Sci.">
        <title>Coiled body numbers in the Arabidopsis root epidermis are regulated by cell type, developmental stage and cell cycle parameters.</title>
        <authorList>
            <person name="Boudonck K."/>
            <person name="Dolan L."/>
            <person name="Shaw P.J."/>
        </authorList>
    </citation>
    <scope>SUBCELLULAR LOCATION</scope>
    <source>
        <strain>cv. Columbia</strain>
    </source>
</reference>
<reference key="7">
    <citation type="journal article" date="2004" name="Chromosoma">
        <title>Nuclear bodies and compartmentalization of pre-mRNA splicing factors in higher plants.</title>
        <authorList>
            <person name="Docquier S."/>
            <person name="Tillemans V."/>
            <person name="Deltour R."/>
            <person name="Motte P."/>
        </authorList>
    </citation>
    <scope>SUBCELLULAR LOCATION</scope>
    <source>
        <strain>cv. Columbia</strain>
    </source>
</reference>
<reference key="8">
    <citation type="journal article" date="2004" name="Mol. Biol. Cell">
        <title>Use of fluorescent protein tags to study nuclear organization of the spliceosomal machinery in transiently transformed living plant cells.</title>
        <authorList>
            <person name="Lorkovic Z.J."/>
            <person name="Hilscher J."/>
            <person name="Barta A."/>
        </authorList>
    </citation>
    <scope>SUBCELLULAR LOCATION</scope>
</reference>
<reference key="9">
    <citation type="journal article" date="2005" name="RNA">
        <title>Evolutionary conservation of minor U12-type spliceosome between plants and humans.</title>
        <authorList>
            <person name="Lorkovic Z.J."/>
            <person name="Lehner R."/>
            <person name="Forstner C."/>
            <person name="Barta A."/>
        </authorList>
    </citation>
    <scope>SUBUNIT</scope>
    <scope>GENE FAMILY</scope>
</reference>
<reference key="10">
    <citation type="journal article" date="2006" name="Mol. Biol. Cell">
        <title>A distant coilin homologue is required for the formation of cajal bodies in Arabidopsis.</title>
        <authorList>
            <person name="Collier S."/>
            <person name="Pendle A."/>
            <person name="Boudonck K."/>
            <person name="van Rij T."/>
            <person name="Dolan L."/>
            <person name="Shaw P."/>
        </authorList>
    </citation>
    <scope>SUBCELLULAR LOCATION</scope>
</reference>
<reference key="11">
    <citation type="journal article" date="2009" name="Plant J.">
        <title>Arabidopsis RNA immunoprecipitation.</title>
        <authorList>
            <person name="Terzi L.C."/>
            <person name="Simpson G.G."/>
        </authorList>
    </citation>
    <scope>SUBCELLULAR LOCATION</scope>
    <scope>SUBUNIT</scope>
</reference>
<evidence type="ECO:0000250" key="1"/>
<evidence type="ECO:0000255" key="2">
    <source>
        <dbReference type="PROSITE-ProRule" id="PRU00176"/>
    </source>
</evidence>
<evidence type="ECO:0000256" key="3">
    <source>
        <dbReference type="SAM" id="MobiDB-lite"/>
    </source>
</evidence>
<evidence type="ECO:0000269" key="4">
    <source>
    </source>
</evidence>
<evidence type="ECO:0000269" key="5">
    <source>
    </source>
</evidence>
<evidence type="ECO:0000269" key="6">
    <source>
    </source>
</evidence>
<evidence type="ECO:0000269" key="7">
    <source>
    </source>
</evidence>
<evidence type="ECO:0000269" key="8">
    <source>
    </source>
</evidence>
<evidence type="ECO:0000269" key="9">
    <source>
    </source>
</evidence>
<evidence type="ECO:0000305" key="10"/>
<accession>O22922</accession>
<accession>Q8LB63</accession>
<comment type="function">
    <text evidence="1">Involved in nuclear pre-mRNA splicing.</text>
</comment>
<comment type="subunit">
    <text evidence="6 8">Component of the spliceosome where it is associated with snRNP U2.</text>
</comment>
<comment type="subcellular location">
    <subcellularLocation>
        <location evidence="4 5 7">Nucleus</location>
        <location evidence="4 5 7">Cajal body</location>
    </subcellularLocation>
    <subcellularLocation>
        <location evidence="4 5 7 8 9">Nucleus</location>
        <location evidence="4 5 7 8 9">Nucleoplasm</location>
    </subcellularLocation>
    <subcellularLocation>
        <location evidence="9">Cytoplasm</location>
    </subcellularLocation>
    <text evidence="9">Present in coiled bodies and an interchromatin network. Redistributed throughout the cytoplasm upon entry into mitosis. Also detected in central nucleolar vacuole.</text>
</comment>
<comment type="similarity">
    <text evidence="10">Belongs to the RRM U1 A/B'' family.</text>
</comment>
<protein>
    <recommendedName>
        <fullName>U2 small nuclear ribonucleoprotein B''</fullName>
        <shortName>U2 snRNP B''</shortName>
    </recommendedName>
</protein>
<sequence length="232" mass="26237">MLTADIPPNQSIYIQNLNERIKKEELKRSLYCLFSQFGRILDVVALKTPKLRGQAWVTFSEVTAAGHAVRQMQNFPFYDKPMRLQYAKAKSDCLAKAEGTFVPKDKKRKQEEKVERKREDSQRPNTANGPSANGPSANNGVPAPSFQPSGQETMPPNNILFIQNLPHETTSMMLQLLFEQYPGFKEIRMIDAKPGIAFVEYEDDVQASIAMQPLQGFKITPQNPMVISFAKK</sequence>
<name>RU2B1_ARATH</name>
<gene>
    <name type="primary">U2B''</name>
    <name type="ordered locus">At2g30260</name>
    <name type="ORF">T9D9</name>
</gene>
<keyword id="KW-0963">Cytoplasm</keyword>
<keyword id="KW-0507">mRNA processing</keyword>
<keyword id="KW-0508">mRNA splicing</keyword>
<keyword id="KW-0539">Nucleus</keyword>
<keyword id="KW-1185">Reference proteome</keyword>
<keyword id="KW-0677">Repeat</keyword>
<keyword id="KW-0687">Ribonucleoprotein</keyword>
<keyword id="KW-0694">RNA-binding</keyword>
<keyword id="KW-0747">Spliceosome</keyword>
<proteinExistence type="evidence at protein level"/>
<dbReference type="EMBL" id="AC002338">
    <property type="protein sequence ID" value="AAC16931.1"/>
    <property type="molecule type" value="Genomic_DNA"/>
</dbReference>
<dbReference type="EMBL" id="CP002685">
    <property type="protein sequence ID" value="AEC08363.1"/>
    <property type="molecule type" value="Genomic_DNA"/>
</dbReference>
<dbReference type="EMBL" id="BT003068">
    <property type="protein sequence ID" value="AAO23633.1"/>
    <property type="molecule type" value="mRNA"/>
</dbReference>
<dbReference type="EMBL" id="AK227609">
    <property type="protein sequence ID" value="BAE99600.1"/>
    <property type="molecule type" value="mRNA"/>
</dbReference>
<dbReference type="EMBL" id="AY087401">
    <property type="protein sequence ID" value="AAM64950.1"/>
    <property type="molecule type" value="mRNA"/>
</dbReference>
<dbReference type="PIR" id="C84706">
    <property type="entry name" value="C84706"/>
</dbReference>
<dbReference type="RefSeq" id="NP_180585.1">
    <property type="nucleotide sequence ID" value="NM_128579.4"/>
</dbReference>
<dbReference type="SMR" id="O22922"/>
<dbReference type="BioGRID" id="2925">
    <property type="interactions" value="18"/>
</dbReference>
<dbReference type="FunCoup" id="O22922">
    <property type="interactions" value="5099"/>
</dbReference>
<dbReference type="IntAct" id="O22922">
    <property type="interactions" value="4"/>
</dbReference>
<dbReference type="MINT" id="O22922"/>
<dbReference type="STRING" id="3702.O22922"/>
<dbReference type="PaxDb" id="3702-AT2G30260.1"/>
<dbReference type="ProteomicsDB" id="226613"/>
<dbReference type="EnsemblPlants" id="AT2G30260.1">
    <property type="protein sequence ID" value="AT2G30260.1"/>
    <property type="gene ID" value="AT2G30260"/>
</dbReference>
<dbReference type="GeneID" id="817576"/>
<dbReference type="Gramene" id="AT2G30260.1">
    <property type="protein sequence ID" value="AT2G30260.1"/>
    <property type="gene ID" value="AT2G30260"/>
</dbReference>
<dbReference type="KEGG" id="ath:AT2G30260"/>
<dbReference type="Araport" id="AT2G30260"/>
<dbReference type="TAIR" id="AT2G30260">
    <property type="gene designation" value="U2B''"/>
</dbReference>
<dbReference type="eggNOG" id="KOG4206">
    <property type="taxonomic scope" value="Eukaryota"/>
</dbReference>
<dbReference type="HOGENOM" id="CLU_041869_1_1_1"/>
<dbReference type="InParanoid" id="O22922"/>
<dbReference type="OMA" id="VRMIPTK"/>
<dbReference type="PhylomeDB" id="O22922"/>
<dbReference type="CD-CODE" id="4299E36E">
    <property type="entry name" value="Nucleolus"/>
</dbReference>
<dbReference type="PRO" id="PR:O22922"/>
<dbReference type="Proteomes" id="UP000006548">
    <property type="component" value="Chromosome 2"/>
</dbReference>
<dbReference type="ExpressionAtlas" id="O22922">
    <property type="expression patterns" value="baseline and differential"/>
</dbReference>
<dbReference type="GO" id="GO:0015030">
    <property type="term" value="C:Cajal body"/>
    <property type="evidence" value="ECO:0000314"/>
    <property type="project" value="UniProtKB"/>
</dbReference>
<dbReference type="GO" id="GO:0005737">
    <property type="term" value="C:cytoplasm"/>
    <property type="evidence" value="ECO:0000314"/>
    <property type="project" value="TAIR"/>
</dbReference>
<dbReference type="GO" id="GO:0005654">
    <property type="term" value="C:nucleoplasm"/>
    <property type="evidence" value="ECO:0000314"/>
    <property type="project" value="UniProtKB"/>
</dbReference>
<dbReference type="GO" id="GO:0005681">
    <property type="term" value="C:spliceosomal complex"/>
    <property type="evidence" value="ECO:0007669"/>
    <property type="project" value="UniProtKB-KW"/>
</dbReference>
<dbReference type="GO" id="GO:0005686">
    <property type="term" value="C:U2 snRNP"/>
    <property type="evidence" value="ECO:0000314"/>
    <property type="project" value="UniProtKB"/>
</dbReference>
<dbReference type="GO" id="GO:0003723">
    <property type="term" value="F:RNA binding"/>
    <property type="evidence" value="ECO:0007669"/>
    <property type="project" value="UniProtKB-KW"/>
</dbReference>
<dbReference type="GO" id="GO:0000354">
    <property type="term" value="P:cis assembly of pre-catalytic spliceosome"/>
    <property type="evidence" value="ECO:0000304"/>
    <property type="project" value="TAIR"/>
</dbReference>
<dbReference type="CDD" id="cd12246">
    <property type="entry name" value="RRM1_U1A_like"/>
    <property type="match status" value="1"/>
</dbReference>
<dbReference type="CDD" id="cd12247">
    <property type="entry name" value="RRM2_U1A_like"/>
    <property type="match status" value="1"/>
</dbReference>
<dbReference type="FunFam" id="3.30.70.330:FF:000039">
    <property type="entry name" value="U1 small nuclear ribonucleoprotein A"/>
    <property type="match status" value="1"/>
</dbReference>
<dbReference type="FunFam" id="3.30.70.330:FF:000029">
    <property type="entry name" value="U2 small nuclear ribonucleoprotein B"/>
    <property type="match status" value="1"/>
</dbReference>
<dbReference type="Gene3D" id="3.30.70.330">
    <property type="match status" value="2"/>
</dbReference>
<dbReference type="InterPro" id="IPR012677">
    <property type="entry name" value="Nucleotide-bd_a/b_plait_sf"/>
</dbReference>
<dbReference type="InterPro" id="IPR035979">
    <property type="entry name" value="RBD_domain_sf"/>
</dbReference>
<dbReference type="InterPro" id="IPR000504">
    <property type="entry name" value="RRM_dom"/>
</dbReference>
<dbReference type="PANTHER" id="PTHR10501">
    <property type="entry name" value="U1 SMALL NUCLEAR RIBONUCLEOPROTEIN A/U2 SMALL NUCLEAR RIBONUCLEOPROTEIN B"/>
    <property type="match status" value="1"/>
</dbReference>
<dbReference type="Pfam" id="PF00076">
    <property type="entry name" value="RRM_1"/>
    <property type="match status" value="2"/>
</dbReference>
<dbReference type="SMART" id="SM00360">
    <property type="entry name" value="RRM"/>
    <property type="match status" value="2"/>
</dbReference>
<dbReference type="SUPFAM" id="SSF54928">
    <property type="entry name" value="RNA-binding domain, RBD"/>
    <property type="match status" value="2"/>
</dbReference>
<dbReference type="PROSITE" id="PS50102">
    <property type="entry name" value="RRM"/>
    <property type="match status" value="2"/>
</dbReference>